<keyword id="KW-1064">Adaptive immunity</keyword>
<keyword id="KW-0025">Alternative splicing</keyword>
<keyword id="KW-0963">Cytoplasm</keyword>
<keyword id="KW-0217">Developmental protein</keyword>
<keyword id="KW-0391">Immunity</keyword>
<keyword id="KW-0539">Nucleus</keyword>
<keyword id="KW-0597">Phosphoprotein</keyword>
<keyword id="KW-1185">Reference proteome</keyword>
<feature type="chain" id="PRO_0000252379" description="Protein THEMIS">
    <location>
        <begin position="1"/>
        <end position="636"/>
    </location>
</feature>
<feature type="region of interest" description="CABIT 1">
    <location>
        <begin position="1"/>
        <end position="260"/>
    </location>
</feature>
<feature type="region of interest" description="CABIT 2">
    <location>
        <begin position="261"/>
        <end position="520"/>
    </location>
</feature>
<feature type="region of interest" description="Disordered" evidence="2">
    <location>
        <begin position="583"/>
        <end position="636"/>
    </location>
</feature>
<feature type="compositionally biased region" description="Basic and acidic residues" evidence="2">
    <location>
        <begin position="590"/>
        <end position="600"/>
    </location>
</feature>
<feature type="modified residue" description="Phosphoserine" evidence="1">
    <location>
        <position position="586"/>
    </location>
</feature>
<feature type="splice variant" id="VSP_020919" description="In isoform 4." evidence="9">
    <location>
        <begin position="1"/>
        <end position="89"/>
    </location>
</feature>
<feature type="splice variant" id="VSP_020920" description="In isoform 5." evidence="9">
    <original>FQKDIVRILPSLDVEVKDITDSYDA</original>
    <variation>CKYPLRMLSCVSLHCGIWAREAFRT</variation>
    <location>
        <begin position="238"/>
        <end position="262"/>
    </location>
</feature>
<feature type="splice variant" id="VSP_020921" description="In isoform 5." evidence="9">
    <location>
        <begin position="263"/>
        <end position="636"/>
    </location>
</feature>
<feature type="splice variant" id="VSP_020922" description="In isoform 2." evidence="9">
    <original>SHHVDRPKKLPSDESGQDSRAPVGFQNDVADVERQKSKHGPLQPQAPL</original>
    <variation>YLSNNKSHDWKPEDDEA</variation>
    <location>
        <begin position="589"/>
        <end position="636"/>
    </location>
</feature>
<feature type="splice variant" id="VSP_020923" description="In isoform 3." evidence="9">
    <original>SHHVDRPKKLPSDESGQDSRAPVGFQNDVADVERQKSKHGPLQPQAPL</original>
    <variation>DRTPCCC</variation>
    <location>
        <begin position="589"/>
        <end position="636"/>
    </location>
</feature>
<feature type="splice variant" id="VSP_020924" description="In isoform 4." evidence="9">
    <original>SHHVDRPKKLPSDESGQDSRAPVGFQNDVADVERQKSKHGPLQPQAPL</original>
    <variation>NSSKLKNIKNNKT</variation>
    <location>
        <begin position="589"/>
        <end position="636"/>
    </location>
</feature>
<feature type="mutagenesis site" description="Decreased levels of protein expression in thymocytes. Reduced numbers of CD4 and CD8 single-positive thymocytes as well as reduced numbers of peripheral CD4 and CD8 T-cells." evidence="6">
    <original>T</original>
    <variation>P</variation>
    <location>
        <position position="512"/>
    </location>
</feature>
<feature type="sequence conflict" description="In Ref. 2; BAE41228." evidence="10" ref="2">
    <original>N</original>
    <variation>S</variation>
    <location>
        <position position="152"/>
    </location>
</feature>
<organism>
    <name type="scientific">Mus musculus</name>
    <name type="common">Mouse</name>
    <dbReference type="NCBI Taxonomy" id="10090"/>
    <lineage>
        <taxon>Eukaryota</taxon>
        <taxon>Metazoa</taxon>
        <taxon>Chordata</taxon>
        <taxon>Craniata</taxon>
        <taxon>Vertebrata</taxon>
        <taxon>Euteleostomi</taxon>
        <taxon>Mammalia</taxon>
        <taxon>Eutheria</taxon>
        <taxon>Euarchontoglires</taxon>
        <taxon>Glires</taxon>
        <taxon>Rodentia</taxon>
        <taxon>Myomorpha</taxon>
        <taxon>Muroidea</taxon>
        <taxon>Muridae</taxon>
        <taxon>Murinae</taxon>
        <taxon>Mus</taxon>
        <taxon>Mus</taxon>
    </lineage>
</organism>
<protein>
    <recommendedName>
        <fullName>Protein THEMIS</fullName>
    </recommendedName>
    <alternativeName>
        <fullName>Grb2-associating protein</fullName>
        <shortName>Gasp</shortName>
    </alternativeName>
    <alternativeName>
        <fullName>Protein thylex</fullName>
    </alternativeName>
    <alternativeName>
        <fullName>Thymocyte-expressed molecule involved in selection</fullName>
    </alternativeName>
</protein>
<name>THMS1_MOUSE</name>
<proteinExistence type="evidence at protein level"/>
<evidence type="ECO:0000250" key="1">
    <source>
        <dbReference type="UniProtKB" id="Q8N1K5"/>
    </source>
</evidence>
<evidence type="ECO:0000256" key="2">
    <source>
        <dbReference type="SAM" id="MobiDB-lite"/>
    </source>
</evidence>
<evidence type="ECO:0000269" key="3">
    <source>
    </source>
</evidence>
<evidence type="ECO:0000269" key="4">
    <source>
    </source>
</evidence>
<evidence type="ECO:0000269" key="5">
    <source>
    </source>
</evidence>
<evidence type="ECO:0000269" key="6">
    <source>
    </source>
</evidence>
<evidence type="ECO:0000269" key="7">
    <source>
    </source>
</evidence>
<evidence type="ECO:0000269" key="8">
    <source>
    </source>
</evidence>
<evidence type="ECO:0000303" key="9">
    <source>
    </source>
</evidence>
<evidence type="ECO:0000305" key="10"/>
<accession>Q8BGW0</accession>
<accession>Q059Y0</accession>
<accession>Q3TEM0</accession>
<accession>Q3UU76</accession>
<accession>Q8BGP0</accession>
<accession>Q8C9S6</accession>
<comment type="function">
    <text evidence="3 4 5 6 7">Plays a central role in late thymocyte development by controlling both positive and negative T-cell selection. Required to sustain and/or integrate signals required for proper lineage commitment and maturation of T-cells. Regulates T-cell development through T-cell antigen receptor (TCR) signaling and in particular through the regulation of calcium influx and phosphorylation of Erk.</text>
</comment>
<comment type="subunit">
    <text evidence="3 4 5 7 8">Interacts with PLCG1, ITK, GRB2, and LAT.</text>
</comment>
<comment type="interaction">
    <interactant intactId="EBI-15806957">
        <id>Q8BGW0-1</id>
    </interactant>
    <interactant intactId="EBI-15532571">
        <id>Q60631-1</id>
        <label>Grb2</label>
    </interactant>
    <organismsDiffer>false</organismsDiffer>
    <experiments>3</experiments>
</comment>
<comment type="subcellular location">
    <subcellularLocation>
        <location evidence="3 4 6">Cytoplasm</location>
    </subcellularLocation>
    <subcellularLocation>
        <location evidence="4 6">Nucleus</location>
    </subcellularLocation>
</comment>
<comment type="alternative products">
    <event type="alternative splicing"/>
    <isoform>
        <id>Q8BGW0-1</id>
        <name>1</name>
        <sequence type="displayed"/>
    </isoform>
    <isoform>
        <id>Q8BGW0-2</id>
        <name>2</name>
        <sequence type="described" ref="VSP_020922"/>
    </isoform>
    <isoform>
        <id>Q8BGW0-3</id>
        <name>3</name>
        <sequence type="described" ref="VSP_020923"/>
    </isoform>
    <isoform>
        <id>Q8BGW0-4</id>
        <name>4</name>
        <sequence type="described" ref="VSP_020919 VSP_020924"/>
    </isoform>
    <isoform>
        <id>Q8BGW0-5</id>
        <name>5</name>
        <sequence type="described" ref="VSP_020920 VSP_020921"/>
    </isoform>
</comment>
<comment type="tissue specificity">
    <text evidence="3 4 5 7">Expressed in the thymus and to a lesser extent in the spleen but not detectable in non-lymphoid tissues. Highly expressed in thymocytes between the pre-T-cell antigen receptor (pre-TCR) and positive-selection checkpoints and expressed at low level in mature T-cells (at protein level).</text>
</comment>
<comment type="induction">
    <text evidence="5">Down-regulated by stimulation through the alpha-beta TCR.</text>
</comment>
<comment type="PTM">
    <text evidence="4 5">Phosphorylated on Tyr residues quickly after TCR stimulation.</text>
</comment>
<comment type="disruption phenotype">
    <text evidence="3 4 5 6 7">Mice are viable, are born at the expected Mendelian frequency and present no gross abnormalities. They however display a blockade in late T-cell development with defects in thymocyte selection. The number of transitional CD4(+)CD8(int) thymocytes as well as CD4(+) or CD8(+) single-positive thymocytes is lower. Thymocytes show defective positive selection, resulting in fewer mature thymocytes. Negative selection is also impaired. A greater percentage of T-cells have CD4(+)CD25(+)Foxp3(+) regulatory and CD62L(lo)CD44(hi) memory phenotypes compared to wild-type T-cells.</text>
</comment>
<comment type="similarity">
    <text evidence="10">Belongs to the themis family.</text>
</comment>
<gene>
    <name type="primary">Themis</name>
</gene>
<dbReference type="EMBL" id="AB509340">
    <property type="protein sequence ID" value="BAH79575.1"/>
    <property type="molecule type" value="mRNA"/>
</dbReference>
<dbReference type="EMBL" id="AK040594">
    <property type="protein sequence ID" value="BAC30638.1"/>
    <property type="molecule type" value="mRNA"/>
</dbReference>
<dbReference type="EMBL" id="AK041386">
    <property type="protein sequence ID" value="BAC30927.1"/>
    <property type="molecule type" value="mRNA"/>
</dbReference>
<dbReference type="EMBL" id="AK041562">
    <property type="protein sequence ID" value="BAC30986.1"/>
    <property type="molecule type" value="mRNA"/>
</dbReference>
<dbReference type="EMBL" id="AK041622">
    <property type="protein sequence ID" value="BAC31008.1"/>
    <property type="molecule type" value="mRNA"/>
</dbReference>
<dbReference type="EMBL" id="AK088136">
    <property type="protein sequence ID" value="BAC40167.1"/>
    <property type="molecule type" value="mRNA"/>
</dbReference>
<dbReference type="EMBL" id="AK089077">
    <property type="protein sequence ID" value="BAC40738.1"/>
    <property type="molecule type" value="mRNA"/>
</dbReference>
<dbReference type="EMBL" id="AK138701">
    <property type="protein sequence ID" value="BAE23752.1"/>
    <property type="molecule type" value="mRNA"/>
</dbReference>
<dbReference type="EMBL" id="AK169558">
    <property type="protein sequence ID" value="BAE41228.1"/>
    <property type="molecule type" value="mRNA"/>
</dbReference>
<dbReference type="EMBL" id="CH466540">
    <property type="protein sequence ID" value="EDL04825.1"/>
    <property type="molecule type" value="Genomic_DNA"/>
</dbReference>
<dbReference type="EMBL" id="BC125486">
    <property type="protein sequence ID" value="AAI25487.1"/>
    <property type="molecule type" value="mRNA"/>
</dbReference>
<dbReference type="EMBL" id="BC125488">
    <property type="protein sequence ID" value="AAI25489.1"/>
    <property type="molecule type" value="mRNA"/>
</dbReference>
<dbReference type="CCDS" id="CCDS23758.1">
    <molecule id="Q8BGW0-1"/>
</dbReference>
<dbReference type="CCDS" id="CCDS87977.1">
    <molecule id="Q8BGW0-3"/>
</dbReference>
<dbReference type="RefSeq" id="NP_001292592.1">
    <molecule id="Q8BGW0-4"/>
    <property type="nucleotide sequence ID" value="NM_001305663.1"/>
</dbReference>
<dbReference type="RefSeq" id="NP_001361628.1">
    <molecule id="Q8BGW0-3"/>
    <property type="nucleotide sequence ID" value="NM_001374699.1"/>
</dbReference>
<dbReference type="RefSeq" id="NP_848781.1">
    <molecule id="Q8BGW0-1"/>
    <property type="nucleotide sequence ID" value="NM_178666.6"/>
</dbReference>
<dbReference type="DIP" id="DIP-48976N"/>
<dbReference type="FunCoup" id="Q8BGW0">
    <property type="interactions" value="946"/>
</dbReference>
<dbReference type="IntAct" id="Q8BGW0">
    <property type="interactions" value="6"/>
</dbReference>
<dbReference type="STRING" id="10090.ENSMUSP00000060129"/>
<dbReference type="iPTMnet" id="Q8BGW0"/>
<dbReference type="PhosphoSitePlus" id="Q8BGW0"/>
<dbReference type="jPOST" id="Q8BGW0"/>
<dbReference type="PaxDb" id="10090-ENSMUSP00000060129"/>
<dbReference type="ProteomicsDB" id="262812">
    <molecule id="Q8BGW0-1"/>
</dbReference>
<dbReference type="ProteomicsDB" id="262813">
    <molecule id="Q8BGW0-2"/>
</dbReference>
<dbReference type="ProteomicsDB" id="262814">
    <molecule id="Q8BGW0-3"/>
</dbReference>
<dbReference type="ProteomicsDB" id="262815">
    <molecule id="Q8BGW0-4"/>
</dbReference>
<dbReference type="ProteomicsDB" id="262816">
    <molecule id="Q8BGW0-5"/>
</dbReference>
<dbReference type="Antibodypedia" id="49883">
    <property type="antibodies" value="249 antibodies from 33 providers"/>
</dbReference>
<dbReference type="DNASU" id="210757"/>
<dbReference type="Ensembl" id="ENSMUST00000056097.11">
    <molecule id="Q8BGW0-1"/>
    <property type="protein sequence ID" value="ENSMUSP00000060129.5"/>
    <property type="gene ID" value="ENSMUSG00000049109.16"/>
</dbReference>
<dbReference type="Ensembl" id="ENSMUST00000060409.13">
    <molecule id="Q8BGW0-2"/>
    <property type="protein sequence ID" value="ENSMUSP00000055315.7"/>
    <property type="gene ID" value="ENSMUSG00000049109.16"/>
</dbReference>
<dbReference type="Ensembl" id="ENSMUST00000105516.9">
    <molecule id="Q8BGW0-3"/>
    <property type="protein sequence ID" value="ENSMUSP00000101155.3"/>
    <property type="gene ID" value="ENSMUSG00000049109.16"/>
</dbReference>
<dbReference type="GeneID" id="210757"/>
<dbReference type="KEGG" id="mmu:210757"/>
<dbReference type="UCSC" id="uc007eso.2">
    <molecule id="Q8BGW0-5"/>
    <property type="organism name" value="mouse"/>
</dbReference>
<dbReference type="UCSC" id="uc007esp.2">
    <molecule id="Q8BGW0-1"/>
    <property type="organism name" value="mouse"/>
</dbReference>
<dbReference type="UCSC" id="uc007esq.2">
    <molecule id="Q8BGW0-4"/>
    <property type="organism name" value="mouse"/>
</dbReference>
<dbReference type="AGR" id="MGI:2443552"/>
<dbReference type="CTD" id="387357"/>
<dbReference type="MGI" id="MGI:2443552">
    <property type="gene designation" value="Themis"/>
</dbReference>
<dbReference type="VEuPathDB" id="HostDB:ENSMUSG00000049109"/>
<dbReference type="eggNOG" id="ENOG502QSJR">
    <property type="taxonomic scope" value="Eukaryota"/>
</dbReference>
<dbReference type="GeneTree" id="ENSGT00530000063770"/>
<dbReference type="HOGENOM" id="CLU_022319_1_0_1"/>
<dbReference type="InParanoid" id="Q8BGW0"/>
<dbReference type="OMA" id="YDEGSMY"/>
<dbReference type="OrthoDB" id="9879477at2759"/>
<dbReference type="PhylomeDB" id="Q8BGW0"/>
<dbReference type="TreeFam" id="TF333479"/>
<dbReference type="BioGRID-ORCS" id="210757">
    <property type="hits" value="1 hit in 60 CRISPR screens"/>
</dbReference>
<dbReference type="ChiTaRS" id="Themis">
    <property type="organism name" value="mouse"/>
</dbReference>
<dbReference type="PRO" id="PR:Q8BGW0"/>
<dbReference type="Proteomes" id="UP000000589">
    <property type="component" value="Chromosome 10"/>
</dbReference>
<dbReference type="RNAct" id="Q8BGW0">
    <property type="molecule type" value="protein"/>
</dbReference>
<dbReference type="Bgee" id="ENSMUSG00000049109">
    <property type="expression patterns" value="Expressed in thymus and 36 other cell types or tissues"/>
</dbReference>
<dbReference type="ExpressionAtlas" id="Q8BGW0">
    <property type="expression patterns" value="baseline and differential"/>
</dbReference>
<dbReference type="GO" id="GO:0005911">
    <property type="term" value="C:cell-cell junction"/>
    <property type="evidence" value="ECO:0000314"/>
    <property type="project" value="MGI"/>
</dbReference>
<dbReference type="GO" id="GO:0008180">
    <property type="term" value="C:COP9 signalosome"/>
    <property type="evidence" value="ECO:0000314"/>
    <property type="project" value="UniProtKB"/>
</dbReference>
<dbReference type="GO" id="GO:0005737">
    <property type="term" value="C:cytoplasm"/>
    <property type="evidence" value="ECO:0000314"/>
    <property type="project" value="UniProtKB"/>
</dbReference>
<dbReference type="GO" id="GO:0005634">
    <property type="term" value="C:nucleus"/>
    <property type="evidence" value="ECO:0000314"/>
    <property type="project" value="UniProtKB"/>
</dbReference>
<dbReference type="GO" id="GO:0002250">
    <property type="term" value="P:adaptive immune response"/>
    <property type="evidence" value="ECO:0007669"/>
    <property type="project" value="UniProtKB-KW"/>
</dbReference>
<dbReference type="GO" id="GO:0043383">
    <property type="term" value="P:negative T cell selection"/>
    <property type="evidence" value="ECO:0000315"/>
    <property type="project" value="UniProtKB"/>
</dbReference>
<dbReference type="GO" id="GO:0043368">
    <property type="term" value="P:positive T cell selection"/>
    <property type="evidence" value="ECO:0000315"/>
    <property type="project" value="UniProtKB"/>
</dbReference>
<dbReference type="GO" id="GO:0050852">
    <property type="term" value="P:T cell receptor signaling pathway"/>
    <property type="evidence" value="ECO:0000315"/>
    <property type="project" value="UniProtKB"/>
</dbReference>
<dbReference type="InterPro" id="IPR025946">
    <property type="entry name" value="CABIT_dom"/>
</dbReference>
<dbReference type="InterPro" id="IPR039671">
    <property type="entry name" value="THEMIS"/>
</dbReference>
<dbReference type="PANTHER" id="PTHR15215">
    <property type="entry name" value="CABIT DOMAIN-CONTAINING PROTEIN"/>
    <property type="match status" value="1"/>
</dbReference>
<dbReference type="PANTHER" id="PTHR15215:SF1">
    <property type="entry name" value="PROTEIN THEMIS"/>
    <property type="match status" value="1"/>
</dbReference>
<dbReference type="Pfam" id="PF12736">
    <property type="entry name" value="CABIT"/>
    <property type="match status" value="2"/>
</dbReference>
<reference key="1">
    <citation type="journal article" date="2009" name="Mol. Cell. Biol.">
        <title>A novel gene essential for the development of single positive thymocytes.</title>
        <authorList>
            <person name="Kakugawa K."/>
            <person name="Yasuda T."/>
            <person name="Miura I."/>
            <person name="Kobayashi A."/>
            <person name="Fukiage H."/>
            <person name="Satoh R."/>
            <person name="Matsuda M."/>
            <person name="Koseki H."/>
            <person name="Wakana S."/>
            <person name="Kawamoto H."/>
            <person name="Yoshida H."/>
        </authorList>
    </citation>
    <scope>NUCLEOTIDE SEQUENCE [MRNA] (ISOFORM 1)</scope>
    <scope>FUNCTION</scope>
    <scope>SUBCELLULAR LOCATION</scope>
    <scope>DISRUPTION PHENOTYPE</scope>
    <scope>MUTAGENESIS OF THR-512</scope>
    <source>
        <strain>C57BL/6J</strain>
        <tissue>Thymocyte</tissue>
    </source>
</reference>
<reference key="2">
    <citation type="journal article" date="2005" name="Science">
        <title>The transcriptional landscape of the mammalian genome.</title>
        <authorList>
            <person name="Carninci P."/>
            <person name="Kasukawa T."/>
            <person name="Katayama S."/>
            <person name="Gough J."/>
            <person name="Frith M.C."/>
            <person name="Maeda N."/>
            <person name="Oyama R."/>
            <person name="Ravasi T."/>
            <person name="Lenhard B."/>
            <person name="Wells C."/>
            <person name="Kodzius R."/>
            <person name="Shimokawa K."/>
            <person name="Bajic V.B."/>
            <person name="Brenner S.E."/>
            <person name="Batalov S."/>
            <person name="Forrest A.R."/>
            <person name="Zavolan M."/>
            <person name="Davis M.J."/>
            <person name="Wilming L.G."/>
            <person name="Aidinis V."/>
            <person name="Allen J.E."/>
            <person name="Ambesi-Impiombato A."/>
            <person name="Apweiler R."/>
            <person name="Aturaliya R.N."/>
            <person name="Bailey T.L."/>
            <person name="Bansal M."/>
            <person name="Baxter L."/>
            <person name="Beisel K.W."/>
            <person name="Bersano T."/>
            <person name="Bono H."/>
            <person name="Chalk A.M."/>
            <person name="Chiu K.P."/>
            <person name="Choudhary V."/>
            <person name="Christoffels A."/>
            <person name="Clutterbuck D.R."/>
            <person name="Crowe M.L."/>
            <person name="Dalla E."/>
            <person name="Dalrymple B.P."/>
            <person name="de Bono B."/>
            <person name="Della Gatta G."/>
            <person name="di Bernardo D."/>
            <person name="Down T."/>
            <person name="Engstrom P."/>
            <person name="Fagiolini M."/>
            <person name="Faulkner G."/>
            <person name="Fletcher C.F."/>
            <person name="Fukushima T."/>
            <person name="Furuno M."/>
            <person name="Futaki S."/>
            <person name="Gariboldi M."/>
            <person name="Georgii-Hemming P."/>
            <person name="Gingeras T.R."/>
            <person name="Gojobori T."/>
            <person name="Green R.E."/>
            <person name="Gustincich S."/>
            <person name="Harbers M."/>
            <person name="Hayashi Y."/>
            <person name="Hensch T.K."/>
            <person name="Hirokawa N."/>
            <person name="Hill D."/>
            <person name="Huminiecki L."/>
            <person name="Iacono M."/>
            <person name="Ikeo K."/>
            <person name="Iwama A."/>
            <person name="Ishikawa T."/>
            <person name="Jakt M."/>
            <person name="Kanapin A."/>
            <person name="Katoh M."/>
            <person name="Kawasawa Y."/>
            <person name="Kelso J."/>
            <person name="Kitamura H."/>
            <person name="Kitano H."/>
            <person name="Kollias G."/>
            <person name="Krishnan S.P."/>
            <person name="Kruger A."/>
            <person name="Kummerfeld S.K."/>
            <person name="Kurochkin I.V."/>
            <person name="Lareau L.F."/>
            <person name="Lazarevic D."/>
            <person name="Lipovich L."/>
            <person name="Liu J."/>
            <person name="Liuni S."/>
            <person name="McWilliam S."/>
            <person name="Madan Babu M."/>
            <person name="Madera M."/>
            <person name="Marchionni L."/>
            <person name="Matsuda H."/>
            <person name="Matsuzawa S."/>
            <person name="Miki H."/>
            <person name="Mignone F."/>
            <person name="Miyake S."/>
            <person name="Morris K."/>
            <person name="Mottagui-Tabar S."/>
            <person name="Mulder N."/>
            <person name="Nakano N."/>
            <person name="Nakauchi H."/>
            <person name="Ng P."/>
            <person name="Nilsson R."/>
            <person name="Nishiguchi S."/>
            <person name="Nishikawa S."/>
            <person name="Nori F."/>
            <person name="Ohara O."/>
            <person name="Okazaki Y."/>
            <person name="Orlando V."/>
            <person name="Pang K.C."/>
            <person name="Pavan W.J."/>
            <person name="Pavesi G."/>
            <person name="Pesole G."/>
            <person name="Petrovsky N."/>
            <person name="Piazza S."/>
            <person name="Reed J."/>
            <person name="Reid J.F."/>
            <person name="Ring B.Z."/>
            <person name="Ringwald M."/>
            <person name="Rost B."/>
            <person name="Ruan Y."/>
            <person name="Salzberg S.L."/>
            <person name="Sandelin A."/>
            <person name="Schneider C."/>
            <person name="Schoenbach C."/>
            <person name="Sekiguchi K."/>
            <person name="Semple C.A."/>
            <person name="Seno S."/>
            <person name="Sessa L."/>
            <person name="Sheng Y."/>
            <person name="Shibata Y."/>
            <person name="Shimada H."/>
            <person name="Shimada K."/>
            <person name="Silva D."/>
            <person name="Sinclair B."/>
            <person name="Sperling S."/>
            <person name="Stupka E."/>
            <person name="Sugiura K."/>
            <person name="Sultana R."/>
            <person name="Takenaka Y."/>
            <person name="Taki K."/>
            <person name="Tammoja K."/>
            <person name="Tan S.L."/>
            <person name="Tang S."/>
            <person name="Taylor M.S."/>
            <person name="Tegner J."/>
            <person name="Teichmann S.A."/>
            <person name="Ueda H.R."/>
            <person name="van Nimwegen E."/>
            <person name="Verardo R."/>
            <person name="Wei C.L."/>
            <person name="Yagi K."/>
            <person name="Yamanishi H."/>
            <person name="Zabarovsky E."/>
            <person name="Zhu S."/>
            <person name="Zimmer A."/>
            <person name="Hide W."/>
            <person name="Bult C."/>
            <person name="Grimmond S.M."/>
            <person name="Teasdale R.D."/>
            <person name="Liu E.T."/>
            <person name="Brusic V."/>
            <person name="Quackenbush J."/>
            <person name="Wahlestedt C."/>
            <person name="Mattick J.S."/>
            <person name="Hume D.A."/>
            <person name="Kai C."/>
            <person name="Sasaki D."/>
            <person name="Tomaru Y."/>
            <person name="Fukuda S."/>
            <person name="Kanamori-Katayama M."/>
            <person name="Suzuki M."/>
            <person name="Aoki J."/>
            <person name="Arakawa T."/>
            <person name="Iida J."/>
            <person name="Imamura K."/>
            <person name="Itoh M."/>
            <person name="Kato T."/>
            <person name="Kawaji H."/>
            <person name="Kawagashira N."/>
            <person name="Kawashima T."/>
            <person name="Kojima M."/>
            <person name="Kondo S."/>
            <person name="Konno H."/>
            <person name="Nakano K."/>
            <person name="Ninomiya N."/>
            <person name="Nishio T."/>
            <person name="Okada M."/>
            <person name="Plessy C."/>
            <person name="Shibata K."/>
            <person name="Shiraki T."/>
            <person name="Suzuki S."/>
            <person name="Tagami M."/>
            <person name="Waki K."/>
            <person name="Watahiki A."/>
            <person name="Okamura-Oho Y."/>
            <person name="Suzuki H."/>
            <person name="Kawai J."/>
            <person name="Hayashizaki Y."/>
        </authorList>
    </citation>
    <scope>NUCLEOTIDE SEQUENCE [LARGE SCALE MRNA] (ISOFORMS 1; 2; 3; 4 AND 5)</scope>
    <source>
        <strain>C57BL/6J</strain>
        <strain>NOD</strain>
        <tissue>Thymus</tissue>
    </source>
</reference>
<reference key="3">
    <citation type="submission" date="2005-07" db="EMBL/GenBank/DDBJ databases">
        <authorList>
            <person name="Mural R.J."/>
            <person name="Adams M.D."/>
            <person name="Myers E.W."/>
            <person name="Smith H.O."/>
            <person name="Venter J.C."/>
        </authorList>
    </citation>
    <scope>NUCLEOTIDE SEQUENCE [LARGE SCALE GENOMIC DNA]</scope>
</reference>
<reference key="4">
    <citation type="journal article" date="2004" name="Genome Res.">
        <title>The status, quality, and expansion of the NIH full-length cDNA project: the Mammalian Gene Collection (MGC).</title>
        <authorList>
            <consortium name="The MGC Project Team"/>
        </authorList>
    </citation>
    <scope>NUCLEOTIDE SEQUENCE [LARGE SCALE MRNA] (ISOFORM 1)</scope>
    <source>
        <tissue>Brain</tissue>
    </source>
</reference>
<reference key="5">
    <citation type="journal article" date="2009" name="Nat. Immunol.">
        <title>Themis controls thymocyte selection through regulation of T cell antigen receptor-mediated signaling.</title>
        <authorList>
            <person name="Fu G."/>
            <person name="Vallee S."/>
            <person name="Rybakin V."/>
            <person name="McGuire M.V."/>
            <person name="Ampudia J."/>
            <person name="Brockmeyer C."/>
            <person name="Salek M."/>
            <person name="Fallen P.R."/>
            <person name="Hoerter J.A.H."/>
            <person name="Munshi A."/>
            <person name="Huang Y.H."/>
            <person name="Hu J."/>
            <person name="Fox H.S."/>
            <person name="Sauer K."/>
            <person name="Acuto O."/>
            <person name="Gascoigne N.R.J."/>
        </authorList>
    </citation>
    <scope>FUNCTION</scope>
    <scope>TISSUE SPECIFICITY</scope>
    <scope>INDUCTION</scope>
    <scope>DISRUPTION PHENOTYPE</scope>
    <scope>PHOSPHORYLATION</scope>
    <scope>INTERACTION WITH PLCG1 AND ITK</scope>
</reference>
<reference key="6">
    <citation type="journal article" date="2009" name="Nat. Immunol.">
        <title>Themis, a T cell-specific protein important for late thymocyte development.</title>
        <authorList>
            <person name="Lesourne R."/>
            <person name="Uehara S."/>
            <person name="Lee J."/>
            <person name="Song K.-D."/>
            <person name="Li L."/>
            <person name="Pinkhasov J."/>
            <person name="Zhang Y."/>
            <person name="Weng N.-P."/>
            <person name="Wildt K.F."/>
            <person name="Wang L."/>
            <person name="Bosselut R."/>
            <person name="Love P.E."/>
        </authorList>
    </citation>
    <scope>FUNCTION</scope>
    <scope>SUBCELLULAR LOCATION</scope>
    <scope>TISSUE SPECIFICITY</scope>
    <scope>DISRUPTION PHENOTYPE</scope>
    <scope>PHOSPHORYLATION</scope>
    <scope>INTERACTION WITH GRB2</scope>
</reference>
<reference key="7">
    <citation type="journal article" date="2009" name="Nat. Immunol.">
        <title>Themis is a member of a new metazoan gene family and is required for the completion of thymocyte positive selection.</title>
        <authorList>
            <person name="Johnson A.L."/>
            <person name="Aravind L."/>
            <person name="Shulzhenko N."/>
            <person name="Morgun A."/>
            <person name="Choi S.-Y."/>
            <person name="Crockford T.L."/>
            <person name="Lambe T."/>
            <person name="Domaschenz H."/>
            <person name="Kucharska E.M."/>
            <person name="Zheng L."/>
            <person name="Vinuesa C.G."/>
            <person name="Lenardo M.J."/>
            <person name="Goodnow C.C."/>
            <person name="Cornall R.J."/>
            <person name="Schwartz R.H."/>
        </authorList>
    </citation>
    <scope>FUNCTION</scope>
    <scope>SUBCELLULAR LOCATION</scope>
    <scope>TISSUE SPECIFICITY</scope>
    <scope>DISRUPTION PHENOTYPE</scope>
    <scope>INTERACTION WITH GRB2</scope>
</reference>
<reference key="8">
    <citation type="journal article" date="2009" name="Proc. Natl. Acad. Sci. U.S.A.">
        <title>Gasp, a Grb2-associating protein, is critical for positive selection of thymocytes.</title>
        <authorList>
            <person name="Patrick M.S."/>
            <person name="Oda H."/>
            <person name="Hayakawa K."/>
            <person name="Sato Y."/>
            <person name="Eshima K."/>
            <person name="Kirikae T."/>
            <person name="Iemura S."/>
            <person name="Shirai M."/>
            <person name="Abe T."/>
            <person name="Natsume T."/>
            <person name="Sasazuki T."/>
            <person name="Suzuki H."/>
        </authorList>
    </citation>
    <scope>FUNCTION</scope>
    <scope>TISSUE SPECIFICITY</scope>
    <scope>DISRUPTION PHENOTYPE</scope>
    <scope>INTERACTION WITH GRB2</scope>
</reference>
<reference key="9">
    <citation type="journal article" date="2012" name="Nat. Immunol.">
        <title>Tespa1 is involved in late thymocyte development through the regulation of TCR-mediated signaling.</title>
        <authorList>
            <person name="Wang D."/>
            <person name="Zheng M."/>
            <person name="Lei L."/>
            <person name="Ji J."/>
            <person name="Yao Y."/>
            <person name="Qiu Y."/>
            <person name="Ma L."/>
            <person name="Lou J."/>
            <person name="Ouyang C."/>
            <person name="Zhang X."/>
            <person name="He Y."/>
            <person name="Chi J."/>
            <person name="Wang L."/>
            <person name="Kuang Y."/>
            <person name="Wang J."/>
            <person name="Cao X."/>
            <person name="Lu L."/>
        </authorList>
    </citation>
    <scope>INTERACTION WITH GRB2; LAT AND PLCG1</scope>
    <source>
        <tissue>Thymocyte</tissue>
    </source>
</reference>
<sequence>MALSLEEFVYSLDLRTLPRVLEIQSGIYFEGSVYEMFGNECCLSTGEVIKITGLKIKKMMAEICEGAIGGCESQKPFELPMNFPGLFKVMADKTPYLSIEEITRTVNIGPSRLGHPCFYHLKDIKLENLIIKQGEPIRFNSVEEINGETLVNCGVVRNHQSHSFTLPLSQEGEFYECEDEHIYTLKEIVEWKIPKNRTRTVKLTDFSNKWDSTNPFPEDFYGTLILKPVYEIQGVLKFQKDIVRILPSLDVEVKDITDSYDANWFLQLLSTDDLFEMTSKEFPVVAEVVEISQGNHLPQSILQREKTIVIHKKYQASRILASEIRSNFPKRHFLIPISYKGKFKRRPREFPTAYDLQIAKSRKETLHVVATKAFHTLHKELSPVSVGDQFLVHHSETTEVVFEGTRKVNVLTCEKVLNKTREDAQLPLYMEGGFVEVIHDKKQYQISELCTQFCWPFNVKVAVRDLSIKDDILAATPGLQLEEDITDSYLLISDFANPEECWEIPMSRLNMTVRLVNGSSLPADAGLLQVRSFVEEITEEQYYMMRRYESSLSHPPPRPPKHPSAEEMKLTLLSLAEERTINLPKSLKSHHVDRPKKLPSDESGQDSRAPVGFQNDVADVERQKSKHGPLQPQAPL</sequence>